<sequence>MTSKAVVFAYHDIGCTGIEALLNAGYEIAAVFTHADDPRENTFYASVARLCAERGIPLHAPEDVNHPLWLERIRQLRPDFLFSFYYRRLLGAELLACAARGAYNLHGSLLPRYRGRAPANWVLVNGETQTGVTLHRMIERADAGPILAQQAVAIDPEDTALSLHGKLRKAAGALLRDSLPLLALGVLPEVEQDESQASHFGRRTPADGLLDWHRPARQLYDLVRAVTQPYPGAFCQVGEQKLIVWSAEVVAGNHGREPGSVLSCDPLRIACGEDSLVLRFGQRGERGLYLAGTQLATELGLVEGARLRGAASGPQRRTRVLILGVNGFIGNHLSERLLRDGRYEVHGMDIGSDAIERLKADPHFHFVEGDIGIHSEWLEYHVKKCDVVLPLVAIATPIEYTRNPLRVFELDFEENLRIVRYCVKYGKRVVFPSTSEVYGMCQDPDFDEDRSNLVVGPINKQRWIYSVSKQLLDRVIWAYGQQGLRFTLFRPFNWMGPRLDRLDSARIGSSRAITQLILHLVEGTPIRLVDGGAQKRCFTDVDDGIEALARIIDNRDGRCDGQIVNIGNPDNEASIRQLGEELLRQFEAHPLRAQFPPFAGFREVESRSFYGDGYQDVAHRKPSIDNARRLLDWQPTIELRETIGKTLDFFLHEALREREAQA</sequence>
<reference key="1">
    <citation type="journal article" date="2006" name="Genome Biol.">
        <title>Genomic analysis reveals that Pseudomonas aeruginosa virulence is combinatorial.</title>
        <authorList>
            <person name="Lee D.G."/>
            <person name="Urbach J.M."/>
            <person name="Wu G."/>
            <person name="Liberati N.T."/>
            <person name="Feinbaum R.L."/>
            <person name="Miyata S."/>
            <person name="Diggins L.T."/>
            <person name="He J."/>
            <person name="Saucier M."/>
            <person name="Deziel E."/>
            <person name="Friedman L."/>
            <person name="Li L."/>
            <person name="Grills G."/>
            <person name="Montgomery K."/>
            <person name="Kucherlapati R."/>
            <person name="Rahme L.G."/>
            <person name="Ausubel F.M."/>
        </authorList>
    </citation>
    <scope>NUCLEOTIDE SEQUENCE [LARGE SCALE GENOMIC DNA]</scope>
    <source>
        <strain>UCBPP-PA14</strain>
    </source>
</reference>
<proteinExistence type="inferred from homology"/>
<accession>Q02R25</accession>
<organism>
    <name type="scientific">Pseudomonas aeruginosa (strain UCBPP-PA14)</name>
    <dbReference type="NCBI Taxonomy" id="208963"/>
    <lineage>
        <taxon>Bacteria</taxon>
        <taxon>Pseudomonadati</taxon>
        <taxon>Pseudomonadota</taxon>
        <taxon>Gammaproteobacteria</taxon>
        <taxon>Pseudomonadales</taxon>
        <taxon>Pseudomonadaceae</taxon>
        <taxon>Pseudomonas</taxon>
    </lineage>
</organism>
<evidence type="ECO:0000255" key="1">
    <source>
        <dbReference type="HAMAP-Rule" id="MF_01166"/>
    </source>
</evidence>
<protein>
    <recommendedName>
        <fullName evidence="1">Bifunctional polymyxin resistance protein ArnA</fullName>
    </recommendedName>
    <domain>
        <recommendedName>
            <fullName evidence="1">UDP-4-amino-4-deoxy-L-arabinose formyltransferase</fullName>
            <ecNumber evidence="1">2.1.2.13</ecNumber>
        </recommendedName>
        <alternativeName>
            <fullName evidence="1">ArnAFT</fullName>
        </alternativeName>
        <alternativeName>
            <fullName evidence="1">UDP-L-Ara4N formyltransferase</fullName>
        </alternativeName>
    </domain>
    <domain>
        <recommendedName>
            <fullName evidence="1">UDP-glucuronic acid oxidase, UDP-4-keto-hexauronic acid decarboxylating</fullName>
            <ecNumber evidence="1">1.1.1.305</ecNumber>
        </recommendedName>
        <alternativeName>
            <fullName evidence="1">ArnADH</fullName>
        </alternativeName>
        <alternativeName>
            <fullName evidence="1">UDP-GlcUA decarboxylase</fullName>
        </alternativeName>
        <alternativeName>
            <fullName evidence="1">UDP-glucuronic acid dehydrogenase</fullName>
        </alternativeName>
    </domain>
</protein>
<name>ARNA_PSEAB</name>
<feature type="chain" id="PRO_0000281725" description="Bifunctional polymyxin resistance protein ArnA">
    <location>
        <begin position="1"/>
        <end position="662"/>
    </location>
</feature>
<feature type="region of interest" description="Formyltransferase ArnAFT">
    <location>
        <begin position="1"/>
        <end position="307"/>
    </location>
</feature>
<feature type="region of interest" description="Dehydrogenase ArnADH">
    <location>
        <begin position="316"/>
        <end position="662"/>
    </location>
</feature>
<feature type="active site" description="Proton donor; for formyltransferase activity" evidence="1">
    <location>
        <position position="106"/>
    </location>
</feature>
<feature type="active site" description="Proton acceptor; for decarboxylase activity" evidence="1">
    <location>
        <position position="436"/>
    </location>
</feature>
<feature type="active site" description="Proton donor; for decarboxylase activity" evidence="1">
    <location>
        <position position="620"/>
    </location>
</feature>
<feature type="binding site" evidence="1">
    <location>
        <position position="116"/>
    </location>
    <ligand>
        <name>(6R)-10-formyltetrahydrofolate</name>
        <dbReference type="ChEBI" id="CHEBI:195366"/>
    </ligand>
</feature>
<feature type="binding site" evidence="1">
    <location>
        <begin position="138"/>
        <end position="142"/>
    </location>
    <ligand>
        <name>(6R)-10-formyltetrahydrofolate</name>
        <dbReference type="ChEBI" id="CHEBI:195366"/>
    </ligand>
</feature>
<feature type="binding site" evidence="1">
    <location>
        <position position="349"/>
    </location>
    <ligand>
        <name>NAD(+)</name>
        <dbReference type="ChEBI" id="CHEBI:57540"/>
    </ligand>
</feature>
<feature type="binding site" evidence="1">
    <location>
        <begin position="370"/>
        <end position="371"/>
    </location>
    <ligand>
        <name>NAD(+)</name>
        <dbReference type="ChEBI" id="CHEBI:57540"/>
    </ligand>
</feature>
<feature type="binding site" evidence="1">
    <location>
        <position position="395"/>
    </location>
    <ligand>
        <name>UDP-alpha-D-glucuronate</name>
        <dbReference type="ChEBI" id="CHEBI:58052"/>
    </ligand>
</feature>
<feature type="binding site" evidence="1">
    <location>
        <position position="400"/>
    </location>
    <ligand>
        <name>UDP-alpha-D-glucuronate</name>
        <dbReference type="ChEBI" id="CHEBI:58052"/>
    </ligand>
</feature>
<feature type="binding site" evidence="1">
    <location>
        <begin position="434"/>
        <end position="435"/>
    </location>
    <ligand>
        <name>UDP-alpha-D-glucuronate</name>
        <dbReference type="ChEBI" id="CHEBI:58052"/>
    </ligand>
</feature>
<feature type="binding site" evidence="1">
    <location>
        <position position="462"/>
    </location>
    <ligand>
        <name>UDP-alpha-D-glucuronate</name>
        <dbReference type="ChEBI" id="CHEBI:58052"/>
    </ligand>
</feature>
<feature type="binding site" evidence="1">
    <location>
        <position position="493"/>
    </location>
    <ligand>
        <name>UDP-alpha-D-glucuronate</name>
        <dbReference type="ChEBI" id="CHEBI:58052"/>
    </ligand>
</feature>
<feature type="binding site" evidence="1">
    <location>
        <begin position="527"/>
        <end position="536"/>
    </location>
    <ligand>
        <name>UDP-alpha-D-glucuronate</name>
        <dbReference type="ChEBI" id="CHEBI:58052"/>
    </ligand>
</feature>
<feature type="binding site" evidence="1">
    <location>
        <position position="614"/>
    </location>
    <ligand>
        <name>UDP-alpha-D-glucuronate</name>
        <dbReference type="ChEBI" id="CHEBI:58052"/>
    </ligand>
</feature>
<feature type="site" description="Transition state stabilizer" evidence="1">
    <location>
        <position position="104"/>
    </location>
</feature>
<feature type="site" description="Raises pKa of active site His" evidence="1">
    <location>
        <position position="142"/>
    </location>
</feature>
<comment type="function">
    <text evidence="1">Bifunctional enzyme that catalyzes the oxidative decarboxylation of UDP-glucuronic acid (UDP-GlcUA) to UDP-4-keto-arabinose (UDP-Ara4O) and the addition of a formyl group to UDP-4-amino-4-deoxy-L-arabinose (UDP-L-Ara4N) to form UDP-L-4-formamido-arabinose (UDP-L-Ara4FN). The modified arabinose is attached to lipid A and is required for resistance to polymyxin and cationic antimicrobial peptides.</text>
</comment>
<comment type="catalytic activity">
    <reaction evidence="1">
        <text>UDP-alpha-D-glucuronate + NAD(+) = UDP-beta-L-threo-pentopyranos-4-ulose + CO2 + NADH</text>
        <dbReference type="Rhea" id="RHEA:24702"/>
        <dbReference type="ChEBI" id="CHEBI:16526"/>
        <dbReference type="ChEBI" id="CHEBI:57540"/>
        <dbReference type="ChEBI" id="CHEBI:57945"/>
        <dbReference type="ChEBI" id="CHEBI:58052"/>
        <dbReference type="ChEBI" id="CHEBI:58710"/>
        <dbReference type="EC" id="1.1.1.305"/>
    </reaction>
</comment>
<comment type="catalytic activity">
    <reaction evidence="1">
        <text>UDP-4-amino-4-deoxy-beta-L-arabinose + (6R)-10-formyltetrahydrofolate = UDP-4-deoxy-4-formamido-beta-L-arabinose + (6S)-5,6,7,8-tetrahydrofolate + H(+)</text>
        <dbReference type="Rhea" id="RHEA:24706"/>
        <dbReference type="ChEBI" id="CHEBI:15378"/>
        <dbReference type="ChEBI" id="CHEBI:57453"/>
        <dbReference type="ChEBI" id="CHEBI:58708"/>
        <dbReference type="ChEBI" id="CHEBI:58709"/>
        <dbReference type="ChEBI" id="CHEBI:195366"/>
        <dbReference type="EC" id="2.1.2.13"/>
    </reaction>
</comment>
<comment type="pathway">
    <text evidence="1">Nucleotide-sugar biosynthesis; UDP-4-deoxy-4-formamido-beta-L-arabinose biosynthesis; UDP-4-deoxy-4-formamido-beta-L-arabinose from UDP-alpha-D-glucuronate: step 1/3.</text>
</comment>
<comment type="pathway">
    <text evidence="1">Nucleotide-sugar biosynthesis; UDP-4-deoxy-4-formamido-beta-L-arabinose biosynthesis; UDP-4-deoxy-4-formamido-beta-L-arabinose from UDP-alpha-D-glucuronate: step 3/3.</text>
</comment>
<comment type="pathway">
    <text evidence="1">Bacterial outer membrane biogenesis; lipopolysaccharide biosynthesis.</text>
</comment>
<comment type="subunit">
    <text evidence="1">Homohexamer, formed by a dimer of trimers.</text>
</comment>
<comment type="similarity">
    <text evidence="1">In the N-terminal section; belongs to the Fmt family. UDP-L-Ara4N formyltransferase subfamily.</text>
</comment>
<comment type="similarity">
    <text evidence="1">In the C-terminal section; belongs to the NAD(P)-dependent epimerase/dehydratase family. UDP-glucuronic acid decarboxylase subfamily.</text>
</comment>
<keyword id="KW-0046">Antibiotic resistance</keyword>
<keyword id="KW-0441">Lipid A biosynthesis</keyword>
<keyword id="KW-0444">Lipid biosynthesis</keyword>
<keyword id="KW-0443">Lipid metabolism</keyword>
<keyword id="KW-0448">Lipopolysaccharide biosynthesis</keyword>
<keyword id="KW-0511">Multifunctional enzyme</keyword>
<keyword id="KW-0520">NAD</keyword>
<keyword id="KW-0560">Oxidoreductase</keyword>
<keyword id="KW-0808">Transferase</keyword>
<gene>
    <name evidence="1" type="primary">arnA</name>
    <name type="ordered locus">PA14_18350</name>
</gene>
<dbReference type="EC" id="2.1.2.13" evidence="1"/>
<dbReference type="EC" id="1.1.1.305" evidence="1"/>
<dbReference type="EMBL" id="CP000438">
    <property type="protein sequence ID" value="ABJ12788.1"/>
    <property type="molecule type" value="Genomic_DNA"/>
</dbReference>
<dbReference type="RefSeq" id="WP_003092116.1">
    <property type="nucleotide sequence ID" value="NZ_CP034244.1"/>
</dbReference>
<dbReference type="SMR" id="Q02R25"/>
<dbReference type="KEGG" id="pau:PA14_18350"/>
<dbReference type="PseudoCAP" id="PA14_18350"/>
<dbReference type="HOGENOM" id="CLU_007383_23_0_6"/>
<dbReference type="BioCyc" id="PAER208963:G1G74-1514-MONOMER"/>
<dbReference type="UniPathway" id="UPA00030"/>
<dbReference type="UniPathway" id="UPA00032">
    <property type="reaction ID" value="UER00492"/>
</dbReference>
<dbReference type="UniPathway" id="UPA00032">
    <property type="reaction ID" value="UER00494"/>
</dbReference>
<dbReference type="Proteomes" id="UP000000653">
    <property type="component" value="Chromosome"/>
</dbReference>
<dbReference type="GO" id="GO:0016020">
    <property type="term" value="C:membrane"/>
    <property type="evidence" value="ECO:0007669"/>
    <property type="project" value="GOC"/>
</dbReference>
<dbReference type="GO" id="GO:0016831">
    <property type="term" value="F:carboxy-lyase activity"/>
    <property type="evidence" value="ECO:0007669"/>
    <property type="project" value="InterPro"/>
</dbReference>
<dbReference type="GO" id="GO:0099619">
    <property type="term" value="F:UDP-4-amino-4-deoxy-L-arabinose formyltransferase activity"/>
    <property type="evidence" value="ECO:0007669"/>
    <property type="project" value="UniProtKB-EC"/>
</dbReference>
<dbReference type="GO" id="GO:0099618">
    <property type="term" value="F:UDP-glucuronate dehydrogenase activity"/>
    <property type="evidence" value="ECO:0007669"/>
    <property type="project" value="UniProtKB-EC"/>
</dbReference>
<dbReference type="GO" id="GO:0009245">
    <property type="term" value="P:lipid A biosynthetic process"/>
    <property type="evidence" value="ECO:0007669"/>
    <property type="project" value="UniProtKB-KW"/>
</dbReference>
<dbReference type="GO" id="GO:0009103">
    <property type="term" value="P:lipopolysaccharide biosynthetic process"/>
    <property type="evidence" value="ECO:0007669"/>
    <property type="project" value="UniProtKB-UniRule"/>
</dbReference>
<dbReference type="GO" id="GO:0046677">
    <property type="term" value="P:response to antibiotic"/>
    <property type="evidence" value="ECO:0007669"/>
    <property type="project" value="UniProtKB-KW"/>
</dbReference>
<dbReference type="CDD" id="cd08702">
    <property type="entry name" value="Arna_FMT_C"/>
    <property type="match status" value="1"/>
</dbReference>
<dbReference type="CDD" id="cd05257">
    <property type="entry name" value="Arna_like_SDR_e"/>
    <property type="match status" value="1"/>
</dbReference>
<dbReference type="FunFam" id="3.40.50.720:FF:000197">
    <property type="entry name" value="Bifunctional polymyxin resistance protein ArnA"/>
    <property type="match status" value="1"/>
</dbReference>
<dbReference type="Gene3D" id="3.40.50.12230">
    <property type="match status" value="1"/>
</dbReference>
<dbReference type="Gene3D" id="3.40.50.720">
    <property type="entry name" value="NAD(P)-binding Rossmann-like Domain"/>
    <property type="match status" value="1"/>
</dbReference>
<dbReference type="HAMAP" id="MF_01166">
    <property type="entry name" value="ArnA"/>
    <property type="match status" value="1"/>
</dbReference>
<dbReference type="InterPro" id="IPR045869">
    <property type="entry name" value="Arna-like_SDR_e"/>
</dbReference>
<dbReference type="InterPro" id="IPR021168">
    <property type="entry name" value="Bifun_polymyxin_resist_ArnA"/>
</dbReference>
<dbReference type="InterPro" id="IPR001509">
    <property type="entry name" value="Epimerase_deHydtase"/>
</dbReference>
<dbReference type="InterPro" id="IPR005793">
    <property type="entry name" value="Formyl_trans_C"/>
</dbReference>
<dbReference type="InterPro" id="IPR002376">
    <property type="entry name" value="Formyl_transf_N"/>
</dbReference>
<dbReference type="InterPro" id="IPR036477">
    <property type="entry name" value="Formyl_transf_N_sf"/>
</dbReference>
<dbReference type="InterPro" id="IPR011034">
    <property type="entry name" value="Formyl_transferase-like_C_sf"/>
</dbReference>
<dbReference type="InterPro" id="IPR050177">
    <property type="entry name" value="Lipid_A_modif_metabolic_enz"/>
</dbReference>
<dbReference type="InterPro" id="IPR036291">
    <property type="entry name" value="NAD(P)-bd_dom_sf"/>
</dbReference>
<dbReference type="NCBIfam" id="NF005414">
    <property type="entry name" value="PRK06988.1"/>
    <property type="match status" value="1"/>
</dbReference>
<dbReference type="NCBIfam" id="NF005998">
    <property type="entry name" value="PRK08125.1"/>
    <property type="match status" value="1"/>
</dbReference>
<dbReference type="NCBIfam" id="NF008872">
    <property type="entry name" value="PRK11908.1"/>
    <property type="match status" value="1"/>
</dbReference>
<dbReference type="PANTHER" id="PTHR43245">
    <property type="entry name" value="BIFUNCTIONAL POLYMYXIN RESISTANCE PROTEIN ARNA"/>
    <property type="match status" value="1"/>
</dbReference>
<dbReference type="PANTHER" id="PTHR43245:SF13">
    <property type="entry name" value="UDP-D-APIOSE_UDP-D-XYLOSE SYNTHASE 2"/>
    <property type="match status" value="1"/>
</dbReference>
<dbReference type="Pfam" id="PF01370">
    <property type="entry name" value="Epimerase"/>
    <property type="match status" value="1"/>
</dbReference>
<dbReference type="Pfam" id="PF02911">
    <property type="entry name" value="Formyl_trans_C"/>
    <property type="match status" value="1"/>
</dbReference>
<dbReference type="Pfam" id="PF00551">
    <property type="entry name" value="Formyl_trans_N"/>
    <property type="match status" value="1"/>
</dbReference>
<dbReference type="PIRSF" id="PIRSF036506">
    <property type="entry name" value="Bifun_polymyxin_resist_ArnA"/>
    <property type="match status" value="1"/>
</dbReference>
<dbReference type="SUPFAM" id="SSF50486">
    <property type="entry name" value="FMT C-terminal domain-like"/>
    <property type="match status" value="1"/>
</dbReference>
<dbReference type="SUPFAM" id="SSF53328">
    <property type="entry name" value="Formyltransferase"/>
    <property type="match status" value="1"/>
</dbReference>
<dbReference type="SUPFAM" id="SSF51735">
    <property type="entry name" value="NAD(P)-binding Rossmann-fold domains"/>
    <property type="match status" value="1"/>
</dbReference>